<reference key="1">
    <citation type="journal article" date="1990" name="FEBS Lett.">
        <title>Cloning and expression of a cDNA encoding a novel human neurotrophic factor.</title>
        <authorList>
            <person name="Kaisho Y."/>
            <person name="Yoshimura K."/>
            <person name="Nakahama K."/>
        </authorList>
    </citation>
    <scope>NUCLEOTIDE SEQUENCE [MRNA] (ISOFORM 1)</scope>
</reference>
<reference key="2">
    <citation type="journal article" date="1990" name="Neuron">
        <title>Primary structure and biological activity of a novel human neurotrophic factor.</title>
        <authorList>
            <person name="Rosenthal A."/>
            <person name="Goeddel D.V."/>
            <person name="Nguyen T."/>
            <person name="Lewis M."/>
            <person name="Shih A."/>
            <person name="Laramee G.R."/>
            <person name="Nikolics K."/>
            <person name="Winslow J.W."/>
        </authorList>
    </citation>
    <scope>NUCLEOTIDE SEQUENCE [GENOMIC DNA / MRNA] (ISOFORM 1)</scope>
</reference>
<reference key="3">
    <citation type="journal article" date="1990" name="Proc. Natl. Acad. Sci. U.S.A.">
        <title>Molecular cloning of a human gene that is a member of the nerve growth factor family.</title>
        <authorList>
            <person name="Jones K.R."/>
            <person name="Reichardt L.F."/>
        </authorList>
    </citation>
    <scope>NUCLEOTIDE SEQUENCE [GENOMIC DNA]</scope>
</reference>
<reference key="4">
    <citation type="journal article" date="1991" name="Genomics">
        <title>Human and rat brain-derived neurotrophic factor and neurotrophin-3: gene structures, distributions, and chromosomal localizations.</title>
        <authorList>
            <person name="Maisonpierre P.C."/>
            <person name="le Beau M.M."/>
            <person name="Espinosa R. III"/>
            <person name="Ip N.Y."/>
            <person name="Belluscio L."/>
            <person name="de la Monte S.M."/>
            <person name="Squinto S."/>
            <person name="Furth M.E."/>
            <person name="Yancopoulos G.D."/>
        </authorList>
    </citation>
    <scope>NUCLEOTIDE SEQUENCE [GENOMIC DNA]</scope>
</reference>
<reference key="5">
    <citation type="journal article" date="2004" name="Nat. Genet.">
        <title>Complete sequencing and characterization of 21,243 full-length human cDNAs.</title>
        <authorList>
            <person name="Ota T."/>
            <person name="Suzuki Y."/>
            <person name="Nishikawa T."/>
            <person name="Otsuki T."/>
            <person name="Sugiyama T."/>
            <person name="Irie R."/>
            <person name="Wakamatsu A."/>
            <person name="Hayashi K."/>
            <person name="Sato H."/>
            <person name="Nagai K."/>
            <person name="Kimura K."/>
            <person name="Makita H."/>
            <person name="Sekine M."/>
            <person name="Obayashi M."/>
            <person name="Nishi T."/>
            <person name="Shibahara T."/>
            <person name="Tanaka T."/>
            <person name="Ishii S."/>
            <person name="Yamamoto J."/>
            <person name="Saito K."/>
            <person name="Kawai Y."/>
            <person name="Isono Y."/>
            <person name="Nakamura Y."/>
            <person name="Nagahari K."/>
            <person name="Murakami K."/>
            <person name="Yasuda T."/>
            <person name="Iwayanagi T."/>
            <person name="Wagatsuma M."/>
            <person name="Shiratori A."/>
            <person name="Sudo H."/>
            <person name="Hosoiri T."/>
            <person name="Kaku Y."/>
            <person name="Kodaira H."/>
            <person name="Kondo H."/>
            <person name="Sugawara M."/>
            <person name="Takahashi M."/>
            <person name="Kanda K."/>
            <person name="Yokoi T."/>
            <person name="Furuya T."/>
            <person name="Kikkawa E."/>
            <person name="Omura Y."/>
            <person name="Abe K."/>
            <person name="Kamihara K."/>
            <person name="Katsuta N."/>
            <person name="Sato K."/>
            <person name="Tanikawa M."/>
            <person name="Yamazaki M."/>
            <person name="Ninomiya K."/>
            <person name="Ishibashi T."/>
            <person name="Yamashita H."/>
            <person name="Murakawa K."/>
            <person name="Fujimori K."/>
            <person name="Tanai H."/>
            <person name="Kimata M."/>
            <person name="Watanabe M."/>
            <person name="Hiraoka S."/>
            <person name="Chiba Y."/>
            <person name="Ishida S."/>
            <person name="Ono Y."/>
            <person name="Takiguchi S."/>
            <person name="Watanabe S."/>
            <person name="Yosida M."/>
            <person name="Hotuta T."/>
            <person name="Kusano J."/>
            <person name="Kanehori K."/>
            <person name="Takahashi-Fujii A."/>
            <person name="Hara H."/>
            <person name="Tanase T.-O."/>
            <person name="Nomura Y."/>
            <person name="Togiya S."/>
            <person name="Komai F."/>
            <person name="Hara R."/>
            <person name="Takeuchi K."/>
            <person name="Arita M."/>
            <person name="Imose N."/>
            <person name="Musashino K."/>
            <person name="Yuuki H."/>
            <person name="Oshima A."/>
            <person name="Sasaki N."/>
            <person name="Aotsuka S."/>
            <person name="Yoshikawa Y."/>
            <person name="Matsunawa H."/>
            <person name="Ichihara T."/>
            <person name="Shiohata N."/>
            <person name="Sano S."/>
            <person name="Moriya S."/>
            <person name="Momiyama H."/>
            <person name="Satoh N."/>
            <person name="Takami S."/>
            <person name="Terashima Y."/>
            <person name="Suzuki O."/>
            <person name="Nakagawa S."/>
            <person name="Senoh A."/>
            <person name="Mizoguchi H."/>
            <person name="Goto Y."/>
            <person name="Shimizu F."/>
            <person name="Wakebe H."/>
            <person name="Hishigaki H."/>
            <person name="Watanabe T."/>
            <person name="Sugiyama A."/>
            <person name="Takemoto M."/>
            <person name="Kawakami B."/>
            <person name="Yamazaki M."/>
            <person name="Watanabe K."/>
            <person name="Kumagai A."/>
            <person name="Itakura S."/>
            <person name="Fukuzumi Y."/>
            <person name="Fujimori Y."/>
            <person name="Komiyama M."/>
            <person name="Tashiro H."/>
            <person name="Tanigami A."/>
            <person name="Fujiwara T."/>
            <person name="Ono T."/>
            <person name="Yamada K."/>
            <person name="Fujii Y."/>
            <person name="Ozaki K."/>
            <person name="Hirao M."/>
            <person name="Ohmori Y."/>
            <person name="Kawabata A."/>
            <person name="Hikiji T."/>
            <person name="Kobatake N."/>
            <person name="Inagaki H."/>
            <person name="Ikema Y."/>
            <person name="Okamoto S."/>
            <person name="Okitani R."/>
            <person name="Kawakami T."/>
            <person name="Noguchi S."/>
            <person name="Itoh T."/>
            <person name="Shigeta K."/>
            <person name="Senba T."/>
            <person name="Matsumura K."/>
            <person name="Nakajima Y."/>
            <person name="Mizuno T."/>
            <person name="Morinaga M."/>
            <person name="Sasaki M."/>
            <person name="Togashi T."/>
            <person name="Oyama M."/>
            <person name="Hata H."/>
            <person name="Watanabe M."/>
            <person name="Komatsu T."/>
            <person name="Mizushima-Sugano J."/>
            <person name="Satoh T."/>
            <person name="Shirai Y."/>
            <person name="Takahashi Y."/>
            <person name="Nakagawa K."/>
            <person name="Okumura K."/>
            <person name="Nagase T."/>
            <person name="Nomura N."/>
            <person name="Kikuchi H."/>
            <person name="Masuho Y."/>
            <person name="Yamashita R."/>
            <person name="Nakai K."/>
            <person name="Yada T."/>
            <person name="Nakamura Y."/>
            <person name="Ohara O."/>
            <person name="Isogai T."/>
            <person name="Sugano S."/>
        </authorList>
    </citation>
    <scope>NUCLEOTIDE SEQUENCE [LARGE SCALE MRNA] (ISOFORM 2)</scope>
    <source>
        <tissue>Cerebellum</tissue>
    </source>
</reference>
<reference key="6">
    <citation type="submission" date="2004-06" db="EMBL/GenBank/DDBJ databases">
        <title>Cloning of human full open reading frames in Gateway(TM) system entry vector (pDONR201).</title>
        <authorList>
            <person name="Halleck A."/>
            <person name="Ebert L."/>
            <person name="Mkoundinya M."/>
            <person name="Schick M."/>
            <person name="Eisenstein S."/>
            <person name="Neubert P."/>
            <person name="Kstrang K."/>
            <person name="Schatten R."/>
            <person name="Shen B."/>
            <person name="Henze S."/>
            <person name="Mar W."/>
            <person name="Korn B."/>
            <person name="Zuo D."/>
            <person name="Hu Y."/>
            <person name="LaBaer J."/>
        </authorList>
    </citation>
    <scope>NUCLEOTIDE SEQUENCE [LARGE SCALE MRNA] (ISOFORM 1)</scope>
</reference>
<reference key="7">
    <citation type="submission" date="2005-09" db="EMBL/GenBank/DDBJ databases">
        <authorList>
            <person name="Mural R.J."/>
            <person name="Istrail S."/>
            <person name="Sutton G.G."/>
            <person name="Florea L."/>
            <person name="Halpern A.L."/>
            <person name="Mobarry C.M."/>
            <person name="Lippert R."/>
            <person name="Walenz B."/>
            <person name="Shatkay H."/>
            <person name="Dew I."/>
            <person name="Miller J.R."/>
            <person name="Flanigan M.J."/>
            <person name="Edwards N.J."/>
            <person name="Bolanos R."/>
            <person name="Fasulo D."/>
            <person name="Halldorsson B.V."/>
            <person name="Hannenhalli S."/>
            <person name="Turner R."/>
            <person name="Yooseph S."/>
            <person name="Lu F."/>
            <person name="Nusskern D.R."/>
            <person name="Shue B.C."/>
            <person name="Zheng X.H."/>
            <person name="Zhong F."/>
            <person name="Delcher A.L."/>
            <person name="Huson D.H."/>
            <person name="Kravitz S.A."/>
            <person name="Mouchard L."/>
            <person name="Reinert K."/>
            <person name="Remington K.A."/>
            <person name="Clark A.G."/>
            <person name="Waterman M.S."/>
            <person name="Eichler E.E."/>
            <person name="Adams M.D."/>
            <person name="Hunkapiller M.W."/>
            <person name="Myers E.W."/>
            <person name="Venter J.C."/>
        </authorList>
    </citation>
    <scope>NUCLEOTIDE SEQUENCE [LARGE SCALE GENOMIC DNA]</scope>
</reference>
<reference key="8">
    <citation type="journal article" date="2004" name="Genome Res.">
        <title>The status, quality, and expansion of the NIH full-length cDNA project: the Mammalian Gene Collection (MGC).</title>
        <authorList>
            <consortium name="The MGC Project Team"/>
        </authorList>
    </citation>
    <scope>NUCLEOTIDE SEQUENCE [LARGE SCALE MRNA] (ISOFORM 1)</scope>
</reference>
<reference key="9">
    <citation type="journal article" date="1991" name="Neuron">
        <title>Evolutionary studies of the nerve growth factor family reveal a novel member abundantly expressed in Xenopus ovary.</title>
        <authorList>
            <person name="Hallboeoek F."/>
            <person name="Ibanez C.F."/>
            <person name="Persson H."/>
        </authorList>
    </citation>
    <scope>NUCLEOTIDE SEQUENCE OF 194-236</scope>
    <source>
        <tissue>Leukocyte</tissue>
    </source>
</reference>
<reference key="10">
    <citation type="journal article" date="1995" name="Biochemistry">
        <title>Structure of the brain-derived neurotrophic factor/neurotrophin 3 heterodimer.</title>
        <authorList>
            <person name="Robinson R.C."/>
            <person name="Radziejewski C."/>
            <person name="Stuart D.I."/>
            <person name="Jones E.Y."/>
        </authorList>
    </citation>
    <scope>X-RAY CRYSTALLOGRAPHY (2.3 ANGSTROMS)</scope>
</reference>
<reference key="11">
    <citation type="journal article" date="1995" name="Biochem. Biophys. Res. Commun.">
        <title>Association of neurotrophin-3 gene variant with severe forms of schizophrenia.</title>
        <authorList>
            <person name="Hattori M."/>
            <person name="Nanko S."/>
        </authorList>
    </citation>
    <scope>VARIANT GLU-76</scope>
</reference>
<reference key="12">
    <citation type="journal article" date="1996" name="Psychiatr. Genet.">
        <title>Failure to find associations of the CA repeat polymorphism in the first intron and the Gly-63/Glu-63 polymorphism of the neurotrophin-3 gene with schizophrenia.</title>
        <authorList>
            <person name="Arinami T."/>
            <person name="Takekoshi K."/>
            <person name="Itokawa M."/>
            <person name="Hamaguchi H."/>
            <person name="Toru M."/>
        </authorList>
    </citation>
    <scope>VARIANT GLU-76</scope>
</reference>
<accession>P20783</accession>
<accession>B7Z1T5</accession>
<accession>Q6FH50</accession>
<sequence length="257" mass="29355">MSILFYVIFLAYLRGIQGNNMDQRSLPEDSLNSLIIKLIQADILKNKLSKQMVDVKENYQSTLPKAEAPREPERGGPAKSAFQPVIAMDTELLRQQRRYNSPRVLLSDSTPLEPPPLYLMEDYVGSPVVANRTSRRKRYAEHKSHRGEYSVCDSESLWVTDKSSAIDIRGHQVTVLGEIKTGNSPVKQYFYETRCKEARPVKNGCRGIDDKHWNSQCKTSQTYVRALTSENNKLVGWRWIRIDTSCVCALSRKIGRT</sequence>
<keyword id="KW-0002">3D-structure</keyword>
<keyword id="KW-0025">Alternative splicing</keyword>
<keyword id="KW-0165">Cleavage on pair of basic residues</keyword>
<keyword id="KW-1015">Disulfide bond</keyword>
<keyword id="KW-0325">Glycoprotein</keyword>
<keyword id="KW-0339">Growth factor</keyword>
<keyword id="KW-1267">Proteomics identification</keyword>
<keyword id="KW-1185">Reference proteome</keyword>
<keyword id="KW-0964">Secreted</keyword>
<keyword id="KW-0732">Signal</keyword>
<dbReference type="EMBL" id="X53655">
    <property type="protein sequence ID" value="CAA37703.1"/>
    <property type="molecule type" value="mRNA"/>
</dbReference>
<dbReference type="EMBL" id="M37763">
    <property type="protein sequence ID" value="AAA59953.1"/>
    <property type="molecule type" value="Genomic_DNA"/>
</dbReference>
<dbReference type="EMBL" id="M61180">
    <property type="protein sequence ID" value="AAA63231.1"/>
    <property type="molecule type" value="Genomic_DNA"/>
</dbReference>
<dbReference type="EMBL" id="AK293895">
    <property type="protein sequence ID" value="BAH11621.1"/>
    <property type="molecule type" value="mRNA"/>
</dbReference>
<dbReference type="EMBL" id="CR541906">
    <property type="protein sequence ID" value="CAG46704.1"/>
    <property type="molecule type" value="mRNA"/>
</dbReference>
<dbReference type="EMBL" id="CH471116">
    <property type="protein sequence ID" value="EAW88824.1"/>
    <property type="molecule type" value="Genomic_DNA"/>
</dbReference>
<dbReference type="EMBL" id="CH471116">
    <property type="protein sequence ID" value="EAW88825.1"/>
    <property type="molecule type" value="Genomic_DNA"/>
</dbReference>
<dbReference type="EMBL" id="BC069773">
    <property type="protein sequence ID" value="AAH69773.1"/>
    <property type="molecule type" value="mRNA"/>
</dbReference>
<dbReference type="EMBL" id="BC107075">
    <property type="protein sequence ID" value="AAI07076.1"/>
    <property type="molecule type" value="mRNA"/>
</dbReference>
<dbReference type="CCDS" id="CCDS44806.1">
    <molecule id="P20783-2"/>
</dbReference>
<dbReference type="CCDS" id="CCDS8538.1">
    <molecule id="P20783-1"/>
</dbReference>
<dbReference type="PIR" id="A36208">
    <property type="entry name" value="C40304"/>
</dbReference>
<dbReference type="RefSeq" id="NP_001096124.1">
    <molecule id="P20783-2"/>
    <property type="nucleotide sequence ID" value="NM_001102654.2"/>
</dbReference>
<dbReference type="RefSeq" id="NP_002518.1">
    <molecule id="P20783-1"/>
    <property type="nucleotide sequence ID" value="NM_002527.5"/>
</dbReference>
<dbReference type="RefSeq" id="XP_011519265.1">
    <molecule id="P20783-1"/>
    <property type="nucleotide sequence ID" value="XM_011520963.3"/>
</dbReference>
<dbReference type="RefSeq" id="XP_047284857.1">
    <molecule id="P20783-1"/>
    <property type="nucleotide sequence ID" value="XM_047428901.1"/>
</dbReference>
<dbReference type="RefSeq" id="XP_054228107.1">
    <molecule id="P20783-1"/>
    <property type="nucleotide sequence ID" value="XM_054372132.1"/>
</dbReference>
<dbReference type="RefSeq" id="XP_054228108.1">
    <molecule id="P20783-1"/>
    <property type="nucleotide sequence ID" value="XM_054372133.1"/>
</dbReference>
<dbReference type="PDB" id="1B8K">
    <property type="method" value="X-ray"/>
    <property type="resolution" value="2.15 A"/>
    <property type="chains" value="A=139-257"/>
</dbReference>
<dbReference type="PDB" id="1BND">
    <property type="method" value="X-ray"/>
    <property type="resolution" value="2.30 A"/>
    <property type="chains" value="B=139-257"/>
</dbReference>
<dbReference type="PDB" id="1NT3">
    <property type="method" value="X-ray"/>
    <property type="resolution" value="2.40 A"/>
    <property type="chains" value="A=139-257"/>
</dbReference>
<dbReference type="PDB" id="3BUK">
    <property type="method" value="X-ray"/>
    <property type="resolution" value="2.60 A"/>
    <property type="chains" value="A/B=139-257"/>
</dbReference>
<dbReference type="PDBsum" id="1B8K"/>
<dbReference type="PDBsum" id="1BND"/>
<dbReference type="PDBsum" id="1NT3"/>
<dbReference type="PDBsum" id="3BUK"/>
<dbReference type="SMR" id="P20783"/>
<dbReference type="BioGRID" id="110963">
    <property type="interactions" value="33"/>
</dbReference>
<dbReference type="CORUM" id="P20783"/>
<dbReference type="DIP" id="DIP-346N"/>
<dbReference type="FunCoup" id="P20783">
    <property type="interactions" value="715"/>
</dbReference>
<dbReference type="IntAct" id="P20783">
    <property type="interactions" value="24"/>
</dbReference>
<dbReference type="STRING" id="9606.ENSP00000397297"/>
<dbReference type="GlyCosmos" id="P20783">
    <property type="glycosylation" value="1 site, No reported glycans"/>
</dbReference>
<dbReference type="GlyGen" id="P20783">
    <property type="glycosylation" value="1 site"/>
</dbReference>
<dbReference type="iPTMnet" id="P20783"/>
<dbReference type="PhosphoSitePlus" id="P20783"/>
<dbReference type="BioMuta" id="NTF3"/>
<dbReference type="DMDM" id="128581"/>
<dbReference type="jPOST" id="P20783"/>
<dbReference type="MassIVE" id="P20783"/>
<dbReference type="PaxDb" id="9606-ENSP00000397297"/>
<dbReference type="PeptideAtlas" id="P20783"/>
<dbReference type="ProteomicsDB" id="53785">
    <molecule id="P20783-1"/>
</dbReference>
<dbReference type="ProteomicsDB" id="53786">
    <molecule id="P20783-2"/>
</dbReference>
<dbReference type="Antibodypedia" id="22321">
    <property type="antibodies" value="668 antibodies from 41 providers"/>
</dbReference>
<dbReference type="DNASU" id="4908"/>
<dbReference type="Ensembl" id="ENST00000331010.7">
    <molecule id="P20783-1"/>
    <property type="protein sequence ID" value="ENSP00000328738.6"/>
    <property type="gene ID" value="ENSG00000185652.12"/>
</dbReference>
<dbReference type="Ensembl" id="ENST00000423158.4">
    <molecule id="P20783-2"/>
    <property type="protein sequence ID" value="ENSP00000397297.2"/>
    <property type="gene ID" value="ENSG00000185652.12"/>
</dbReference>
<dbReference type="GeneID" id="4908"/>
<dbReference type="KEGG" id="hsa:4908"/>
<dbReference type="MANE-Select" id="ENST00000423158.4">
    <molecule id="P20783-2"/>
    <property type="protein sequence ID" value="ENSP00000397297.2"/>
    <property type="RefSeq nucleotide sequence ID" value="NM_001102654.2"/>
    <property type="RefSeq protein sequence ID" value="NP_001096124.1"/>
</dbReference>
<dbReference type="UCSC" id="uc001qnk.5">
    <molecule id="P20783-1"/>
    <property type="organism name" value="human"/>
</dbReference>
<dbReference type="AGR" id="HGNC:8023"/>
<dbReference type="CTD" id="4908"/>
<dbReference type="DisGeNET" id="4908"/>
<dbReference type="GeneCards" id="NTF3"/>
<dbReference type="HGNC" id="HGNC:8023">
    <property type="gene designation" value="NTF3"/>
</dbReference>
<dbReference type="HPA" id="ENSG00000185652">
    <property type="expression patterns" value="Tissue enhanced (ovary)"/>
</dbReference>
<dbReference type="MIM" id="162660">
    <property type="type" value="gene"/>
</dbReference>
<dbReference type="neXtProt" id="NX_P20783"/>
<dbReference type="OpenTargets" id="ENSG00000185652"/>
<dbReference type="PharmGKB" id="PA31806"/>
<dbReference type="VEuPathDB" id="HostDB:ENSG00000185652"/>
<dbReference type="eggNOG" id="ENOG502R4FK">
    <property type="taxonomic scope" value="Eukaryota"/>
</dbReference>
<dbReference type="GeneTree" id="ENSGT00390000007725"/>
<dbReference type="HOGENOM" id="CLU_059942_1_1_1"/>
<dbReference type="InParanoid" id="P20783"/>
<dbReference type="OMA" id="FQPMIAM"/>
<dbReference type="OrthoDB" id="6491780at2759"/>
<dbReference type="PAN-GO" id="P20783">
    <property type="GO annotations" value="16 GO annotations based on evolutionary models"/>
</dbReference>
<dbReference type="PhylomeDB" id="P20783"/>
<dbReference type="TreeFam" id="TF106463"/>
<dbReference type="PathwayCommons" id="P20783"/>
<dbReference type="Reactome" id="R-HSA-1257604">
    <property type="pathway name" value="PIP3 activates AKT signaling"/>
</dbReference>
<dbReference type="Reactome" id="R-HSA-2219530">
    <property type="pathway name" value="Constitutive Signaling by Aberrant PI3K in Cancer"/>
</dbReference>
<dbReference type="Reactome" id="R-HSA-6811558">
    <property type="pathway name" value="PI5P, PP2A and IER3 Regulate PI3K/AKT Signaling"/>
</dbReference>
<dbReference type="Reactome" id="R-HSA-9025046">
    <property type="pathway name" value="NTF3 activates NTRK2 (TRKB) signaling"/>
</dbReference>
<dbReference type="Reactome" id="R-HSA-9034013">
    <property type="pathway name" value="NTF3 activates NTRK3 signaling"/>
</dbReference>
<dbReference type="Reactome" id="R-HSA-9034015">
    <property type="pathway name" value="Signaling by NTRK3 (TRKC)"/>
</dbReference>
<dbReference type="Reactome" id="R-HSA-9034793">
    <property type="pathway name" value="Activated NTRK3 signals through PLCG1"/>
</dbReference>
<dbReference type="Reactome" id="R-HSA-9034864">
    <property type="pathway name" value="Activated NTRK3 signals through RAS"/>
</dbReference>
<dbReference type="Reactome" id="R-HSA-9603381">
    <property type="pathway name" value="Activated NTRK3 signals through PI3K"/>
</dbReference>
<dbReference type="SignaLink" id="P20783"/>
<dbReference type="SIGNOR" id="P20783"/>
<dbReference type="BioGRID-ORCS" id="4908">
    <property type="hits" value="20 hits in 1147 CRISPR screens"/>
</dbReference>
<dbReference type="EvolutionaryTrace" id="P20783"/>
<dbReference type="GeneWiki" id="Neurotrophin-3"/>
<dbReference type="GenomeRNAi" id="4908"/>
<dbReference type="Pharos" id="P20783">
    <property type="development level" value="Tbio"/>
</dbReference>
<dbReference type="PRO" id="PR:P20783"/>
<dbReference type="Proteomes" id="UP000005640">
    <property type="component" value="Chromosome 12"/>
</dbReference>
<dbReference type="RNAct" id="P20783">
    <property type="molecule type" value="protein"/>
</dbReference>
<dbReference type="Bgee" id="ENSG00000185652">
    <property type="expression patterns" value="Expressed in popliteal artery and 119 other cell types or tissues"/>
</dbReference>
<dbReference type="GO" id="GO:0030424">
    <property type="term" value="C:axon"/>
    <property type="evidence" value="ECO:0000318"/>
    <property type="project" value="GO_Central"/>
</dbReference>
<dbReference type="GO" id="GO:0030425">
    <property type="term" value="C:dendrite"/>
    <property type="evidence" value="ECO:0000318"/>
    <property type="project" value="GO_Central"/>
</dbReference>
<dbReference type="GO" id="GO:0005576">
    <property type="term" value="C:extracellular region"/>
    <property type="evidence" value="ECO:0000304"/>
    <property type="project" value="Reactome"/>
</dbReference>
<dbReference type="GO" id="GO:0005615">
    <property type="term" value="C:extracellular space"/>
    <property type="evidence" value="ECO:0000318"/>
    <property type="project" value="GO_Central"/>
</dbReference>
<dbReference type="GO" id="GO:0008021">
    <property type="term" value="C:synaptic vesicle"/>
    <property type="evidence" value="ECO:0000318"/>
    <property type="project" value="GO_Central"/>
</dbReference>
<dbReference type="GO" id="GO:0042056">
    <property type="term" value="F:chemoattractant activity"/>
    <property type="evidence" value="ECO:0000314"/>
    <property type="project" value="BHF-UCL"/>
</dbReference>
<dbReference type="GO" id="GO:0008083">
    <property type="term" value="F:growth factor activity"/>
    <property type="evidence" value="ECO:0000314"/>
    <property type="project" value="BHF-UCL"/>
</dbReference>
<dbReference type="GO" id="GO:0005163">
    <property type="term" value="F:nerve growth factor receptor binding"/>
    <property type="evidence" value="ECO:0000318"/>
    <property type="project" value="GO_Central"/>
</dbReference>
<dbReference type="GO" id="GO:0005102">
    <property type="term" value="F:signaling receptor binding"/>
    <property type="evidence" value="ECO:0000304"/>
    <property type="project" value="ProtInc"/>
</dbReference>
<dbReference type="GO" id="GO:0007169">
    <property type="term" value="P:cell surface receptor protein tyrosine kinase signaling pathway"/>
    <property type="evidence" value="ECO:0000314"/>
    <property type="project" value="BHF-UCL"/>
</dbReference>
<dbReference type="GO" id="GO:0007267">
    <property type="term" value="P:cell-cell signaling"/>
    <property type="evidence" value="ECO:0000304"/>
    <property type="project" value="ProtInc"/>
</dbReference>
<dbReference type="GO" id="GO:0050930">
    <property type="term" value="P:induction of positive chemotaxis"/>
    <property type="evidence" value="ECO:0000314"/>
    <property type="project" value="BHF-UCL"/>
</dbReference>
<dbReference type="GO" id="GO:0050804">
    <property type="term" value="P:modulation of chemical synaptic transmission"/>
    <property type="evidence" value="ECO:0000318"/>
    <property type="project" value="GO_Central"/>
</dbReference>
<dbReference type="GO" id="GO:0043524">
    <property type="term" value="P:negative regulation of neuron apoptotic process"/>
    <property type="evidence" value="ECO:0000318"/>
    <property type="project" value="GO_Central"/>
</dbReference>
<dbReference type="GO" id="GO:0021675">
    <property type="term" value="P:nerve development"/>
    <property type="evidence" value="ECO:0000318"/>
    <property type="project" value="GO_Central"/>
</dbReference>
<dbReference type="GO" id="GO:0038180">
    <property type="term" value="P:nerve growth factor signaling pathway"/>
    <property type="evidence" value="ECO:0000318"/>
    <property type="project" value="GO_Central"/>
</dbReference>
<dbReference type="GO" id="GO:0007399">
    <property type="term" value="P:nervous system development"/>
    <property type="evidence" value="ECO:0000304"/>
    <property type="project" value="ProtInc"/>
</dbReference>
<dbReference type="GO" id="GO:0048812">
    <property type="term" value="P:neuron projection morphogenesis"/>
    <property type="evidence" value="ECO:0000318"/>
    <property type="project" value="GO_Central"/>
</dbReference>
<dbReference type="GO" id="GO:0030335">
    <property type="term" value="P:positive regulation of cell migration"/>
    <property type="evidence" value="ECO:0000314"/>
    <property type="project" value="BHF-UCL"/>
</dbReference>
<dbReference type="GO" id="GO:0008284">
    <property type="term" value="P:positive regulation of cell population proliferation"/>
    <property type="evidence" value="ECO:0000314"/>
    <property type="project" value="BHF-UCL"/>
</dbReference>
<dbReference type="GO" id="GO:0043410">
    <property type="term" value="P:positive regulation of MAPK cascade"/>
    <property type="evidence" value="ECO:0000314"/>
    <property type="project" value="BHF-UCL"/>
</dbReference>
<dbReference type="GO" id="GO:0051897">
    <property type="term" value="P:positive regulation of phosphatidylinositol 3-kinase/protein kinase B signal transduction"/>
    <property type="evidence" value="ECO:0000314"/>
    <property type="project" value="BHF-UCL"/>
</dbReference>
<dbReference type="GO" id="GO:0002092">
    <property type="term" value="P:positive regulation of receptor internalization"/>
    <property type="evidence" value="ECO:0000314"/>
    <property type="project" value="BHF-UCL"/>
</dbReference>
<dbReference type="GO" id="GO:0042981">
    <property type="term" value="P:regulation of apoptotic process"/>
    <property type="evidence" value="ECO:0000316"/>
    <property type="project" value="MGI"/>
</dbReference>
<dbReference type="GO" id="GO:0007165">
    <property type="term" value="P:signal transduction"/>
    <property type="evidence" value="ECO:0000304"/>
    <property type="project" value="ProtInc"/>
</dbReference>
<dbReference type="FunFam" id="2.10.90.10:FF:000002">
    <property type="entry name" value="Brain-derived neurotrophic factor"/>
    <property type="match status" value="1"/>
</dbReference>
<dbReference type="Gene3D" id="2.10.90.10">
    <property type="entry name" value="Cystine-knot cytokines"/>
    <property type="match status" value="1"/>
</dbReference>
<dbReference type="InterPro" id="IPR029034">
    <property type="entry name" value="Cystine-knot_cytokine"/>
</dbReference>
<dbReference type="InterPro" id="IPR020408">
    <property type="entry name" value="Nerve_growth_factor-like"/>
</dbReference>
<dbReference type="InterPro" id="IPR002072">
    <property type="entry name" value="Nerve_growth_factor-rel"/>
</dbReference>
<dbReference type="InterPro" id="IPR019846">
    <property type="entry name" value="Nerve_growth_factor_CS"/>
</dbReference>
<dbReference type="InterPro" id="IPR015578">
    <property type="entry name" value="Neurotrophin-3"/>
</dbReference>
<dbReference type="InterPro" id="IPR045815">
    <property type="entry name" value="NTF3_N"/>
</dbReference>
<dbReference type="PANTHER" id="PTHR11589">
    <property type="entry name" value="NERVE GROWTH FACTOR NGF -RELATED"/>
    <property type="match status" value="1"/>
</dbReference>
<dbReference type="PANTHER" id="PTHR11589:SF4">
    <property type="entry name" value="NEUROTROPHIN-3"/>
    <property type="match status" value="1"/>
</dbReference>
<dbReference type="Pfam" id="PF00243">
    <property type="entry name" value="NGF"/>
    <property type="match status" value="1"/>
</dbReference>
<dbReference type="Pfam" id="PF19338">
    <property type="entry name" value="NTF3_N"/>
    <property type="match status" value="1"/>
</dbReference>
<dbReference type="PIRSF" id="PIRSF001789">
    <property type="entry name" value="NGF"/>
    <property type="match status" value="1"/>
</dbReference>
<dbReference type="PRINTS" id="PR01914">
    <property type="entry name" value="NEUROTROPHN3"/>
</dbReference>
<dbReference type="PRINTS" id="PR00268">
    <property type="entry name" value="NGF"/>
</dbReference>
<dbReference type="SMART" id="SM00140">
    <property type="entry name" value="NGF"/>
    <property type="match status" value="1"/>
</dbReference>
<dbReference type="SUPFAM" id="SSF57501">
    <property type="entry name" value="Cystine-knot cytokines"/>
    <property type="match status" value="1"/>
</dbReference>
<dbReference type="PROSITE" id="PS00248">
    <property type="entry name" value="NGF_1"/>
    <property type="match status" value="1"/>
</dbReference>
<dbReference type="PROSITE" id="PS50270">
    <property type="entry name" value="NGF_2"/>
    <property type="match status" value="1"/>
</dbReference>
<evidence type="ECO:0000255" key="1"/>
<evidence type="ECO:0000256" key="2">
    <source>
        <dbReference type="SAM" id="MobiDB-lite"/>
    </source>
</evidence>
<evidence type="ECO:0000269" key="3">
    <source>
    </source>
</evidence>
<evidence type="ECO:0000269" key="4">
    <source>
    </source>
</evidence>
<evidence type="ECO:0000303" key="5">
    <source>
    </source>
</evidence>
<evidence type="ECO:0000305" key="6"/>
<evidence type="ECO:0007829" key="7">
    <source>
        <dbReference type="PDB" id="1B8K"/>
    </source>
</evidence>
<evidence type="ECO:0007829" key="8">
    <source>
        <dbReference type="PDB" id="1BND"/>
    </source>
</evidence>
<evidence type="ECO:0007829" key="9">
    <source>
        <dbReference type="PDB" id="3BUK"/>
    </source>
</evidence>
<comment type="function">
    <text>Seems to promote the survival of visceral and proprioceptive sensory neurons.</text>
</comment>
<comment type="interaction">
    <interactant intactId="EBI-1025994">
        <id>P20783</id>
    </interactant>
    <interactant intactId="EBI-1026003">
        <id>P23560</id>
        <label>BDNF</label>
    </interactant>
    <organismsDiffer>false</organismsDiffer>
    <experiments>3</experiments>
</comment>
<comment type="interaction">
    <interactant intactId="EBI-1025994">
        <id>P20783</id>
    </interactant>
    <interactant intactId="EBI-748397">
        <id>P50222</id>
        <label>MEOX2</label>
    </interactant>
    <organismsDiffer>false</organismsDiffer>
    <experiments>3</experiments>
</comment>
<comment type="interaction">
    <interactant intactId="EBI-1025994">
        <id>P20783</id>
    </interactant>
    <interactant intactId="EBI-1038810">
        <id>P07174</id>
        <label>Ngfr</label>
    </interactant>
    <organismsDiffer>true</organismsDiffer>
    <experiments>4</experiments>
</comment>
<comment type="interaction">
    <interactant intactId="EBI-25844111">
        <id>P20783-2</id>
    </interactant>
    <interactant intactId="EBI-356015">
        <id>Q14204</id>
        <label>DYNC1H1</label>
    </interactant>
    <organismsDiffer>false</organismsDiffer>
    <experiments>3</experiments>
</comment>
<comment type="subcellular location">
    <subcellularLocation>
        <location>Secreted</location>
    </subcellularLocation>
</comment>
<comment type="alternative products">
    <event type="alternative splicing"/>
    <isoform>
        <id>P20783-1</id>
        <name>1</name>
        <sequence type="displayed"/>
    </isoform>
    <isoform>
        <id>P20783-2</id>
        <name>2</name>
        <sequence type="described" ref="VSP_043353"/>
    </isoform>
</comment>
<comment type="tissue specificity">
    <text>Brain and peripheral tissues.</text>
</comment>
<comment type="polymorphism">
    <text evidence="3 4">Variant Glu-76 (frequently reported as Glu-63) was thought to be associated with severe forms of schizophrenia. This does not seem to be the case.</text>
</comment>
<comment type="similarity">
    <text evidence="6">Belongs to the NGF-beta family.</text>
</comment>
<proteinExistence type="evidence at protein level"/>
<feature type="signal peptide" evidence="1">
    <location>
        <begin position="1"/>
        <end position="18"/>
    </location>
</feature>
<feature type="propeptide" id="PRO_0000019659">
    <location>
        <begin position="19"/>
        <end position="138"/>
    </location>
</feature>
<feature type="chain" id="PRO_0000019660" description="Neurotrophin-3">
    <location>
        <begin position="139"/>
        <end position="257"/>
    </location>
</feature>
<feature type="region of interest" description="Disordered" evidence="2">
    <location>
        <begin position="61"/>
        <end position="81"/>
    </location>
</feature>
<feature type="compositionally biased region" description="Basic and acidic residues" evidence="2">
    <location>
        <begin position="67"/>
        <end position="76"/>
    </location>
</feature>
<feature type="glycosylation site" description="N-linked (GlcNAc...) asparagine" evidence="1">
    <location>
        <position position="131"/>
    </location>
</feature>
<feature type="disulfide bond">
    <location>
        <begin position="152"/>
        <end position="217"/>
    </location>
</feature>
<feature type="disulfide bond">
    <location>
        <begin position="195"/>
        <end position="246"/>
    </location>
</feature>
<feature type="disulfide bond">
    <location>
        <begin position="205"/>
        <end position="248"/>
    </location>
</feature>
<feature type="splice variant" id="VSP_043353" description="In isoform 2." evidence="5">
    <original>M</original>
    <variation>MVTFATILQVNKVM</variation>
    <location>
        <position position="1"/>
    </location>
</feature>
<feature type="sequence variant" id="VAR_012084" description="In dbSNP:rs1805149." evidence="3 4">
    <original>G</original>
    <variation>E</variation>
    <location>
        <position position="76"/>
    </location>
</feature>
<feature type="strand" evidence="8">
    <location>
        <begin position="148"/>
        <end position="152"/>
    </location>
</feature>
<feature type="strand" evidence="7">
    <location>
        <begin position="154"/>
        <end position="159"/>
    </location>
</feature>
<feature type="strand" evidence="7">
    <location>
        <begin position="164"/>
        <end position="167"/>
    </location>
</feature>
<feature type="strand" evidence="7">
    <location>
        <begin position="172"/>
        <end position="175"/>
    </location>
</feature>
<feature type="strand" evidence="8">
    <location>
        <begin position="177"/>
        <end position="179"/>
    </location>
</feature>
<feature type="turn" evidence="8">
    <location>
        <begin position="181"/>
        <end position="183"/>
    </location>
</feature>
<feature type="strand" evidence="7">
    <location>
        <begin position="190"/>
        <end position="195"/>
    </location>
</feature>
<feature type="strand" evidence="8">
    <location>
        <begin position="200"/>
        <end position="205"/>
    </location>
</feature>
<feature type="turn" evidence="9">
    <location>
        <begin position="210"/>
        <end position="212"/>
    </location>
</feature>
<feature type="strand" evidence="7">
    <location>
        <begin position="216"/>
        <end position="233"/>
    </location>
</feature>
<feature type="strand" evidence="7">
    <location>
        <begin position="236"/>
        <end position="249"/>
    </location>
</feature>
<name>NTF3_HUMAN</name>
<protein>
    <recommendedName>
        <fullName>Neurotrophin-3</fullName>
        <shortName>NT-3</shortName>
    </recommendedName>
    <alternativeName>
        <fullName>HDNF</fullName>
    </alternativeName>
    <alternativeName>
        <fullName>Nerve growth factor 2</fullName>
        <shortName>NGF-2</shortName>
    </alternativeName>
    <alternativeName>
        <fullName>Neurotrophic factor</fullName>
    </alternativeName>
</protein>
<gene>
    <name type="primary">NTF3</name>
</gene>
<organism>
    <name type="scientific">Homo sapiens</name>
    <name type="common">Human</name>
    <dbReference type="NCBI Taxonomy" id="9606"/>
    <lineage>
        <taxon>Eukaryota</taxon>
        <taxon>Metazoa</taxon>
        <taxon>Chordata</taxon>
        <taxon>Craniata</taxon>
        <taxon>Vertebrata</taxon>
        <taxon>Euteleostomi</taxon>
        <taxon>Mammalia</taxon>
        <taxon>Eutheria</taxon>
        <taxon>Euarchontoglires</taxon>
        <taxon>Primates</taxon>
        <taxon>Haplorrhini</taxon>
        <taxon>Catarrhini</taxon>
        <taxon>Hominidae</taxon>
        <taxon>Homo</taxon>
    </lineage>
</organism>